<name>URK_ECO57</name>
<keyword id="KW-0067">ATP-binding</keyword>
<keyword id="KW-0963">Cytoplasm</keyword>
<keyword id="KW-0418">Kinase</keyword>
<keyword id="KW-0547">Nucleotide-binding</keyword>
<keyword id="KW-1185">Reference proteome</keyword>
<keyword id="KW-0808">Transferase</keyword>
<evidence type="ECO:0000255" key="1">
    <source>
        <dbReference type="HAMAP-Rule" id="MF_00551"/>
    </source>
</evidence>
<evidence type="ECO:0000305" key="2"/>
<feature type="chain" id="PRO_0000164472" description="Uridine kinase">
    <location>
        <begin position="1"/>
        <end position="213"/>
    </location>
</feature>
<feature type="binding site" evidence="1">
    <location>
        <begin position="15"/>
        <end position="22"/>
    </location>
    <ligand>
        <name>ATP</name>
        <dbReference type="ChEBI" id="CHEBI:30616"/>
    </ligand>
</feature>
<gene>
    <name evidence="1" type="primary">udk</name>
    <name type="ordered locus">Z3234</name>
    <name type="ordered locus">ECs2873</name>
</gene>
<dbReference type="EC" id="2.7.1.48" evidence="1"/>
<dbReference type="EMBL" id="AE005174">
    <property type="protein sequence ID" value="AAG57128.1"/>
    <property type="status" value="ALT_INIT"/>
    <property type="molecule type" value="Genomic_DNA"/>
</dbReference>
<dbReference type="EMBL" id="BA000007">
    <property type="protein sequence ID" value="BAB36296.2"/>
    <property type="molecule type" value="Genomic_DNA"/>
</dbReference>
<dbReference type="RefSeq" id="NP_310900.2">
    <property type="nucleotide sequence ID" value="NC_002695.1"/>
</dbReference>
<dbReference type="RefSeq" id="WP_001295424.1">
    <property type="nucleotide sequence ID" value="NZ_VOAI01000013.1"/>
</dbReference>
<dbReference type="SMR" id="P0A8F6"/>
<dbReference type="STRING" id="155864.Z3234"/>
<dbReference type="GeneID" id="916575"/>
<dbReference type="GeneID" id="93775125"/>
<dbReference type="KEGG" id="ece:Z3234"/>
<dbReference type="KEGG" id="ecs:ECs_2873"/>
<dbReference type="PATRIC" id="fig|386585.9.peg.3006"/>
<dbReference type="eggNOG" id="COG0572">
    <property type="taxonomic scope" value="Bacteria"/>
</dbReference>
<dbReference type="HOGENOM" id="CLU_021278_1_2_6"/>
<dbReference type="OMA" id="TVKPMHE"/>
<dbReference type="UniPathway" id="UPA00574">
    <property type="reaction ID" value="UER00637"/>
</dbReference>
<dbReference type="UniPathway" id="UPA00579">
    <property type="reaction ID" value="UER00640"/>
</dbReference>
<dbReference type="Proteomes" id="UP000000558">
    <property type="component" value="Chromosome"/>
</dbReference>
<dbReference type="Proteomes" id="UP000002519">
    <property type="component" value="Chromosome"/>
</dbReference>
<dbReference type="GO" id="GO:0005737">
    <property type="term" value="C:cytoplasm"/>
    <property type="evidence" value="ECO:0007669"/>
    <property type="project" value="UniProtKB-SubCell"/>
</dbReference>
<dbReference type="GO" id="GO:0005524">
    <property type="term" value="F:ATP binding"/>
    <property type="evidence" value="ECO:0007669"/>
    <property type="project" value="UniProtKB-UniRule"/>
</dbReference>
<dbReference type="GO" id="GO:0043771">
    <property type="term" value="F:cytidine kinase activity"/>
    <property type="evidence" value="ECO:0007669"/>
    <property type="project" value="RHEA"/>
</dbReference>
<dbReference type="GO" id="GO:0004849">
    <property type="term" value="F:uridine kinase activity"/>
    <property type="evidence" value="ECO:0007669"/>
    <property type="project" value="UniProtKB-UniRule"/>
</dbReference>
<dbReference type="GO" id="GO:0044211">
    <property type="term" value="P:CTP salvage"/>
    <property type="evidence" value="ECO:0007669"/>
    <property type="project" value="UniProtKB-UniRule"/>
</dbReference>
<dbReference type="GO" id="GO:0044206">
    <property type="term" value="P:UMP salvage"/>
    <property type="evidence" value="ECO:0007669"/>
    <property type="project" value="UniProtKB-UniRule"/>
</dbReference>
<dbReference type="CDD" id="cd02023">
    <property type="entry name" value="UMPK"/>
    <property type="match status" value="1"/>
</dbReference>
<dbReference type="FunFam" id="3.40.50.300:FF:000252">
    <property type="entry name" value="Uridine kinase"/>
    <property type="match status" value="1"/>
</dbReference>
<dbReference type="Gene3D" id="3.40.50.300">
    <property type="entry name" value="P-loop containing nucleotide triphosphate hydrolases"/>
    <property type="match status" value="1"/>
</dbReference>
<dbReference type="HAMAP" id="MF_00551">
    <property type="entry name" value="Uridine_kinase"/>
    <property type="match status" value="1"/>
</dbReference>
<dbReference type="InterPro" id="IPR027417">
    <property type="entry name" value="P-loop_NTPase"/>
</dbReference>
<dbReference type="InterPro" id="IPR006083">
    <property type="entry name" value="PRK/URK"/>
</dbReference>
<dbReference type="InterPro" id="IPR026008">
    <property type="entry name" value="Uridine_kinase"/>
</dbReference>
<dbReference type="InterPro" id="IPR000764">
    <property type="entry name" value="Uridine_kinase-like"/>
</dbReference>
<dbReference type="NCBIfam" id="NF004018">
    <property type="entry name" value="PRK05480.1"/>
    <property type="match status" value="1"/>
</dbReference>
<dbReference type="NCBIfam" id="TIGR00235">
    <property type="entry name" value="udk"/>
    <property type="match status" value="1"/>
</dbReference>
<dbReference type="PANTHER" id="PTHR10285">
    <property type="entry name" value="URIDINE KINASE"/>
    <property type="match status" value="1"/>
</dbReference>
<dbReference type="Pfam" id="PF00485">
    <property type="entry name" value="PRK"/>
    <property type="match status" value="1"/>
</dbReference>
<dbReference type="PRINTS" id="PR00988">
    <property type="entry name" value="URIDINKINASE"/>
</dbReference>
<dbReference type="SUPFAM" id="SSF52540">
    <property type="entry name" value="P-loop containing nucleoside triphosphate hydrolases"/>
    <property type="match status" value="1"/>
</dbReference>
<organism>
    <name type="scientific">Escherichia coli O157:H7</name>
    <dbReference type="NCBI Taxonomy" id="83334"/>
    <lineage>
        <taxon>Bacteria</taxon>
        <taxon>Pseudomonadati</taxon>
        <taxon>Pseudomonadota</taxon>
        <taxon>Gammaproteobacteria</taxon>
        <taxon>Enterobacterales</taxon>
        <taxon>Enterobacteriaceae</taxon>
        <taxon>Escherichia</taxon>
    </lineage>
</organism>
<proteinExistence type="inferred from homology"/>
<accession>P0A8F6</accession>
<accession>P31218</accession>
<accession>P78085</accession>
<accession>Q8X7L3</accession>
<protein>
    <recommendedName>
        <fullName evidence="1">Uridine kinase</fullName>
        <ecNumber evidence="1">2.7.1.48</ecNumber>
    </recommendedName>
    <alternativeName>
        <fullName evidence="1">Cytidine monophosphokinase</fullName>
    </alternativeName>
    <alternativeName>
        <fullName evidence="1">Uridine monophosphokinase</fullName>
    </alternativeName>
</protein>
<sequence length="213" mass="24353">MTDQSHQCVIIGIAGASASGKSLIASTLYRELREQVGDEHIGVIPEDCYYKDQSHLSMEERVKTNYDHPSAMDHSLLLEHLQALKRGSAIDLPVYSYVEHTRMKETVTVEPKKVIILEGILLLTDARLRDELNFSIFVDTPLDICLMRRIKRDVNERGRSMDSVMAQYQKTVRPMFLQFIEPSKQYADIIVPRGGKNRIAIDILKAKISQFFE</sequence>
<reference key="1">
    <citation type="journal article" date="2001" name="Nature">
        <title>Genome sequence of enterohaemorrhagic Escherichia coli O157:H7.</title>
        <authorList>
            <person name="Perna N.T."/>
            <person name="Plunkett G. III"/>
            <person name="Burland V."/>
            <person name="Mau B."/>
            <person name="Glasner J.D."/>
            <person name="Rose D.J."/>
            <person name="Mayhew G.F."/>
            <person name="Evans P.S."/>
            <person name="Gregor J."/>
            <person name="Kirkpatrick H.A."/>
            <person name="Posfai G."/>
            <person name="Hackett J."/>
            <person name="Klink S."/>
            <person name="Boutin A."/>
            <person name="Shao Y."/>
            <person name="Miller L."/>
            <person name="Grotbeck E.J."/>
            <person name="Davis N.W."/>
            <person name="Lim A."/>
            <person name="Dimalanta E.T."/>
            <person name="Potamousis K."/>
            <person name="Apodaca J."/>
            <person name="Anantharaman T.S."/>
            <person name="Lin J."/>
            <person name="Yen G."/>
            <person name="Schwartz D.C."/>
            <person name="Welch R.A."/>
            <person name="Blattner F.R."/>
        </authorList>
    </citation>
    <scope>NUCLEOTIDE SEQUENCE [LARGE SCALE GENOMIC DNA]</scope>
    <source>
        <strain>O157:H7 / EDL933 / ATCC 700927 / EHEC</strain>
    </source>
</reference>
<reference key="2">
    <citation type="journal article" date="2001" name="DNA Res.">
        <title>Complete genome sequence of enterohemorrhagic Escherichia coli O157:H7 and genomic comparison with a laboratory strain K-12.</title>
        <authorList>
            <person name="Hayashi T."/>
            <person name="Makino K."/>
            <person name="Ohnishi M."/>
            <person name="Kurokawa K."/>
            <person name="Ishii K."/>
            <person name="Yokoyama K."/>
            <person name="Han C.-G."/>
            <person name="Ohtsubo E."/>
            <person name="Nakayama K."/>
            <person name="Murata T."/>
            <person name="Tanaka M."/>
            <person name="Tobe T."/>
            <person name="Iida T."/>
            <person name="Takami H."/>
            <person name="Honda T."/>
            <person name="Sasakawa C."/>
            <person name="Ogasawara N."/>
            <person name="Yasunaga T."/>
            <person name="Kuhara S."/>
            <person name="Shiba T."/>
            <person name="Hattori M."/>
            <person name="Shinagawa H."/>
        </authorList>
    </citation>
    <scope>NUCLEOTIDE SEQUENCE [LARGE SCALE GENOMIC DNA]</scope>
    <source>
        <strain>O157:H7 / Sakai / RIMD 0509952 / EHEC</strain>
    </source>
</reference>
<comment type="catalytic activity">
    <reaction evidence="1">
        <text>uridine + ATP = UMP + ADP + H(+)</text>
        <dbReference type="Rhea" id="RHEA:16825"/>
        <dbReference type="ChEBI" id="CHEBI:15378"/>
        <dbReference type="ChEBI" id="CHEBI:16704"/>
        <dbReference type="ChEBI" id="CHEBI:30616"/>
        <dbReference type="ChEBI" id="CHEBI:57865"/>
        <dbReference type="ChEBI" id="CHEBI:456216"/>
        <dbReference type="EC" id="2.7.1.48"/>
    </reaction>
</comment>
<comment type="catalytic activity">
    <reaction evidence="1">
        <text>cytidine + ATP = CMP + ADP + H(+)</text>
        <dbReference type="Rhea" id="RHEA:24674"/>
        <dbReference type="ChEBI" id="CHEBI:15378"/>
        <dbReference type="ChEBI" id="CHEBI:17562"/>
        <dbReference type="ChEBI" id="CHEBI:30616"/>
        <dbReference type="ChEBI" id="CHEBI:60377"/>
        <dbReference type="ChEBI" id="CHEBI:456216"/>
    </reaction>
</comment>
<comment type="pathway">
    <text evidence="1">Pyrimidine metabolism; CTP biosynthesis via salvage pathway; CTP from cytidine: step 1/3.</text>
</comment>
<comment type="pathway">
    <text evidence="1">Pyrimidine metabolism; UMP biosynthesis via salvage pathway; UMP from uridine: step 1/1.</text>
</comment>
<comment type="subcellular location">
    <subcellularLocation>
        <location evidence="1">Cytoplasm</location>
    </subcellularLocation>
</comment>
<comment type="similarity">
    <text evidence="1">Belongs to the uridine kinase family.</text>
</comment>
<comment type="sequence caution" evidence="2">
    <conflict type="erroneous initiation">
        <sequence resource="EMBL-CDS" id="AAG57128"/>
    </conflict>
    <text>Extended N-terminus.</text>
</comment>